<sequence>MSSQVAKAATQGELLEALYGEVTVQELQETNLGVLTPHRGDQRVVFTPLLPPRTQTRISGVLRRLRPTRNTGGLLYLEKVVVVFTPHVPDDAPGEVEVWIHDSLLPNLNSVGPRLRFPLNGGPRLMAFYPPYSIPLMDKSKEMPRCFAIVSELLSASYVGGGSPFSLHIMWQPQVESLAHNYLMRPPRMQKICRGMVKDALGSLSSRKSYIAGAVSHRFALTAANPLPISGDTAEEAGEASSGEPHWVPEATAPRVRKAT</sequence>
<proteinExistence type="evidence at protein level"/>
<feature type="chain" id="PRO_0000409933" description="Movement protein">
    <location>
        <begin position="1"/>
        <end position="260"/>
    </location>
</feature>
<feature type="region of interest" description="Disordered" evidence="1">
    <location>
        <begin position="230"/>
        <end position="260"/>
    </location>
</feature>
<keyword id="KW-1185">Reference proteome</keyword>
<keyword id="KW-0694">RNA-binding</keyword>
<keyword id="KW-0813">Transport</keyword>
<keyword id="KW-0916">Viral movement protein</keyword>
<name>MVP_GRVMC</name>
<comment type="function">
    <text evidence="2">Transports viral genome to neighboring plant cells directly through plasmosdesmata, without any budding. The movement protein allows efficient cell to cell propagation, by bypassing the host cell wall barrier. Might act by forming tubules structures that increase the size exclusion limit (SEL) of plasmodesmata, thereby allowing viral ribonucleoproteins to spread directly to neighboring cells. Binds to ssRNA.</text>
</comment>
<evidence type="ECO:0000256" key="1">
    <source>
        <dbReference type="SAM" id="MobiDB-lite"/>
    </source>
</evidence>
<evidence type="ECO:0000269" key="2">
    <source>
    </source>
</evidence>
<reference key="1">
    <citation type="journal article" date="1996" name="J. Gen. Virol.">
        <title>Complete nucleotide sequence and organization of the RNA genome of groundnut rosette umbravirus.</title>
        <authorList>
            <person name="Taliansky M.E."/>
            <person name="Robinson D.J."/>
            <person name="Murant A.F."/>
        </authorList>
    </citation>
    <scope>NUCLEOTIDE SEQUENCE [GENOMIC RNA]</scope>
</reference>
<reference key="2">
    <citation type="journal article" date="2001" name="J. Gen. Virol.">
        <title>Umbravirus-encoded movement protein induces tubule formation on the surface of protoplasts and binds RNA incompletely and non-cooperatively.</title>
        <authorList>
            <person name="Nurkiyanova K.M."/>
            <person name="Ryabov E.V."/>
            <person name="Kalinina N.O."/>
            <person name="Fan Y."/>
            <person name="Andreev I."/>
            <person name="Fitzgerald A.G."/>
            <person name="Palukaitis P."/>
            <person name="Taliansky M."/>
        </authorList>
    </citation>
    <scope>FUNCTION</scope>
    <scope>RNA-BINDING</scope>
</reference>
<organism>
    <name type="scientific">Groundnut rosette virus (strain MC1)</name>
    <name type="common">GRV</name>
    <dbReference type="NCBI Taxonomy" id="1005060"/>
    <lineage>
        <taxon>Viruses</taxon>
        <taxon>Riboviria</taxon>
        <taxon>Orthornavirae</taxon>
        <taxon>Kitrinoviricota</taxon>
        <taxon>Tolucaviricetes</taxon>
        <taxon>Tolivirales</taxon>
        <taxon>Tombusviridae</taxon>
        <taxon>Calvusvirinae</taxon>
        <taxon>Umbravirus</taxon>
        <taxon>Umbravirus arachidis</taxon>
    </lineage>
</organism>
<dbReference type="EMBL" id="Z69910">
    <property type="protein sequence ID" value="CAA93801.1"/>
    <property type="molecule type" value="Genomic_RNA"/>
</dbReference>
<dbReference type="RefSeq" id="NP_619661.1">
    <property type="nucleotide sequence ID" value="NC_003603.1"/>
</dbReference>
<dbReference type="GeneID" id="940199"/>
<dbReference type="KEGG" id="vg:940199"/>
<dbReference type="Proteomes" id="UP000008927">
    <property type="component" value="Genome"/>
</dbReference>
<dbReference type="GO" id="GO:0003723">
    <property type="term" value="F:RNA binding"/>
    <property type="evidence" value="ECO:0007669"/>
    <property type="project" value="UniProtKB-KW"/>
</dbReference>
<dbReference type="GO" id="GO:0046740">
    <property type="term" value="P:transport of virus in host, cell to cell"/>
    <property type="evidence" value="ECO:0007669"/>
    <property type="project" value="UniProtKB-KW"/>
</dbReference>
<dbReference type="InterPro" id="IPR000603">
    <property type="entry name" value="MPV"/>
</dbReference>
<dbReference type="Pfam" id="PF00803">
    <property type="entry name" value="3A"/>
    <property type="match status" value="1"/>
</dbReference>
<accession>Q67685</accession>
<protein>
    <recommendedName>
        <fullName>Movement protein</fullName>
    </recommendedName>
</protein>
<gene>
    <name type="ORF">ORF4</name>
</gene>
<organismHost>
    <name type="scientific">Clitoria</name>
    <dbReference type="NCBI Taxonomy" id="43365"/>
</organismHost>
<organismHost>
    <name type="scientific">Lablab purpureus</name>
    <name type="common">Hyacinth bean</name>
    <name type="synonym">Dolichos lablab</name>
    <dbReference type="NCBI Taxonomy" id="35936"/>
</organismHost>
<organismHost>
    <name type="scientific">Medicago sativa</name>
    <name type="common">Alfalfa</name>
    <dbReference type="NCBI Taxonomy" id="3879"/>
</organismHost>
<organismHost>
    <name type="scientific">Phaseolus vulgaris</name>
    <name type="common">Kidney bean</name>
    <name type="synonym">French bean</name>
    <dbReference type="NCBI Taxonomy" id="3885"/>
</organismHost>
<organismHost>
    <name type="scientific">Vigna unguiculata</name>
    <name type="common">Cowpea</name>
    <dbReference type="NCBI Taxonomy" id="3917"/>
</organismHost>